<keyword id="KW-0325">Glycoprotein</keyword>
<keyword id="KW-0328">Glycosyltransferase</keyword>
<keyword id="KW-0472">Membrane</keyword>
<keyword id="KW-1185">Reference proteome</keyword>
<keyword id="KW-0735">Signal-anchor</keyword>
<keyword id="KW-0808">Transferase</keyword>
<keyword id="KW-0812">Transmembrane</keyword>
<keyword id="KW-1133">Transmembrane helix</keyword>
<reference key="1">
    <citation type="submission" date="2003-07" db="EMBL/GenBank/DDBJ databases">
        <authorList>
            <person name="Shan Y.X."/>
            <person name="Yu L."/>
        </authorList>
    </citation>
    <scope>NUCLEOTIDE SEQUENCE [MRNA]</scope>
    <scope>VARIANT LYS-LEU-LEU-SER-PRO-ALA-TYR-SER-TRP-ASP-LEU-ALA-PHE-SER-PRO-PRO-PRO-GLN-ILE-GLN-TYR-VAL-LYS-VAL-ALA-HIS-ASP-SER-GLN-ARG-LYS-LEU-276 INS</scope>
</reference>
<reference key="2">
    <citation type="journal article" date="2004" name="Nature">
        <title>DNA sequence and analysis of human chromosome 9.</title>
        <authorList>
            <person name="Humphray S.J."/>
            <person name="Oliver K."/>
            <person name="Hunt A.R."/>
            <person name="Plumb R.W."/>
            <person name="Loveland J.E."/>
            <person name="Howe K.L."/>
            <person name="Andrews T.D."/>
            <person name="Searle S."/>
            <person name="Hunt S.E."/>
            <person name="Scott C.E."/>
            <person name="Jones M.C."/>
            <person name="Ainscough R."/>
            <person name="Almeida J.P."/>
            <person name="Ambrose K.D."/>
            <person name="Ashwell R.I.S."/>
            <person name="Babbage A.K."/>
            <person name="Babbage S."/>
            <person name="Bagguley C.L."/>
            <person name="Bailey J."/>
            <person name="Banerjee R."/>
            <person name="Barker D.J."/>
            <person name="Barlow K.F."/>
            <person name="Bates K."/>
            <person name="Beasley H."/>
            <person name="Beasley O."/>
            <person name="Bird C.P."/>
            <person name="Bray-Allen S."/>
            <person name="Brown A.J."/>
            <person name="Brown J.Y."/>
            <person name="Burford D."/>
            <person name="Burrill W."/>
            <person name="Burton J."/>
            <person name="Carder C."/>
            <person name="Carter N.P."/>
            <person name="Chapman J.C."/>
            <person name="Chen Y."/>
            <person name="Clarke G."/>
            <person name="Clark S.Y."/>
            <person name="Clee C.M."/>
            <person name="Clegg S."/>
            <person name="Collier R.E."/>
            <person name="Corby N."/>
            <person name="Crosier M."/>
            <person name="Cummings A.T."/>
            <person name="Davies J."/>
            <person name="Dhami P."/>
            <person name="Dunn M."/>
            <person name="Dutta I."/>
            <person name="Dyer L.W."/>
            <person name="Earthrowl M.E."/>
            <person name="Faulkner L."/>
            <person name="Fleming C.J."/>
            <person name="Frankish A."/>
            <person name="Frankland J.A."/>
            <person name="French L."/>
            <person name="Fricker D.G."/>
            <person name="Garner P."/>
            <person name="Garnett J."/>
            <person name="Ghori J."/>
            <person name="Gilbert J.G.R."/>
            <person name="Glison C."/>
            <person name="Grafham D.V."/>
            <person name="Gribble S."/>
            <person name="Griffiths C."/>
            <person name="Griffiths-Jones S."/>
            <person name="Grocock R."/>
            <person name="Guy J."/>
            <person name="Hall R.E."/>
            <person name="Hammond S."/>
            <person name="Harley J.L."/>
            <person name="Harrison E.S.I."/>
            <person name="Hart E.A."/>
            <person name="Heath P.D."/>
            <person name="Henderson C.D."/>
            <person name="Hopkins B.L."/>
            <person name="Howard P.J."/>
            <person name="Howden P.J."/>
            <person name="Huckle E."/>
            <person name="Johnson C."/>
            <person name="Johnson D."/>
            <person name="Joy A.A."/>
            <person name="Kay M."/>
            <person name="Keenan S."/>
            <person name="Kershaw J.K."/>
            <person name="Kimberley A.M."/>
            <person name="King A."/>
            <person name="Knights A."/>
            <person name="Laird G.K."/>
            <person name="Langford C."/>
            <person name="Lawlor S."/>
            <person name="Leongamornlert D.A."/>
            <person name="Leversha M."/>
            <person name="Lloyd C."/>
            <person name="Lloyd D.M."/>
            <person name="Lovell J."/>
            <person name="Martin S."/>
            <person name="Mashreghi-Mohammadi M."/>
            <person name="Matthews L."/>
            <person name="McLaren S."/>
            <person name="McLay K.E."/>
            <person name="McMurray A."/>
            <person name="Milne S."/>
            <person name="Nickerson T."/>
            <person name="Nisbett J."/>
            <person name="Nordsiek G."/>
            <person name="Pearce A.V."/>
            <person name="Peck A.I."/>
            <person name="Porter K.M."/>
            <person name="Pandian R."/>
            <person name="Pelan S."/>
            <person name="Phillimore B."/>
            <person name="Povey S."/>
            <person name="Ramsey Y."/>
            <person name="Rand V."/>
            <person name="Scharfe M."/>
            <person name="Sehra H.K."/>
            <person name="Shownkeen R."/>
            <person name="Sims S.K."/>
            <person name="Skuce C.D."/>
            <person name="Smith M."/>
            <person name="Steward C.A."/>
            <person name="Swarbreck D."/>
            <person name="Sycamore N."/>
            <person name="Tester J."/>
            <person name="Thorpe A."/>
            <person name="Tracey A."/>
            <person name="Tromans A."/>
            <person name="Thomas D.W."/>
            <person name="Wall M."/>
            <person name="Wallis J.M."/>
            <person name="West A.P."/>
            <person name="Whitehead S.L."/>
            <person name="Willey D.L."/>
            <person name="Williams S.A."/>
            <person name="Wilming L."/>
            <person name="Wray P.W."/>
            <person name="Young L."/>
            <person name="Ashurst J.L."/>
            <person name="Coulson A."/>
            <person name="Blocker H."/>
            <person name="Durbin R.M."/>
            <person name="Sulston J.E."/>
            <person name="Hubbard T."/>
            <person name="Jackson M.J."/>
            <person name="Bentley D.R."/>
            <person name="Beck S."/>
            <person name="Rogers J."/>
            <person name="Dunham I."/>
        </authorList>
    </citation>
    <scope>NUCLEOTIDE SEQUENCE [LARGE SCALE GENOMIC DNA]</scope>
</reference>
<reference key="3">
    <citation type="journal article" date="2010" name="Hum. Mol. Genet.">
        <title>A genome-wide association study identifies GLT6D1 as a susceptibility locus for periodontitis.</title>
        <authorList>
            <person name="Schaefer A.S."/>
            <person name="Richter G.M."/>
            <person name="Nothnagel M."/>
            <person name="Manke T."/>
            <person name="Dommisch H."/>
            <person name="Jacobs G."/>
            <person name="Arlt A."/>
            <person name="Rosenstiel P."/>
            <person name="Noack B."/>
            <person name="Groessner-Schreiber B."/>
            <person name="Jepsen S."/>
            <person name="Loos B.G."/>
            <person name="Schreiber S."/>
        </authorList>
    </citation>
    <scope>TISSUE SPECIFICITY</scope>
</reference>
<reference key="4">
    <citation type="journal article" date="2009" name="Glycobiology">
        <title>Human pseudogenes of the ABO family show a complex evolutionary dynamics and loss of function.</title>
        <authorList>
            <person name="Casals F."/>
            <person name="Ferrer-Admetlla A."/>
            <person name="Sikora M."/>
            <person name="Ramirez-Soriano A."/>
            <person name="Marques-Bonet T."/>
            <person name="Despiau S."/>
            <person name="Roubinet F."/>
            <person name="Calafell F."/>
            <person name="Bertranpetit J."/>
            <person name="Blancher A."/>
        </authorList>
    </citation>
    <scope>VARIANTS ARG-195 AND SER-219</scope>
    <scope>CAUTION</scope>
</reference>
<dbReference type="EC" id="2.4.1.-"/>
<dbReference type="EMBL" id="AY336054">
    <property type="protein sequence ID" value="AAQ01588.1"/>
    <property type="molecule type" value="mRNA"/>
</dbReference>
<dbReference type="EMBL" id="AL354761">
    <property type="status" value="NOT_ANNOTATED_CDS"/>
    <property type="molecule type" value="Genomic_DNA"/>
</dbReference>
<dbReference type="CCDS" id="CCDS43900.1"/>
<dbReference type="RefSeq" id="NP_892019.2">
    <property type="nucleotide sequence ID" value="NM_182974.3"/>
</dbReference>
<dbReference type="RefSeq" id="XP_011516939.1">
    <property type="nucleotide sequence ID" value="XM_011518637.3"/>
</dbReference>
<dbReference type="RefSeq" id="XP_024303302.1">
    <property type="nucleotide sequence ID" value="XM_024447534.2"/>
</dbReference>
<dbReference type="RefSeq" id="XP_054218899.1">
    <property type="nucleotide sequence ID" value="XM_054362924.1"/>
</dbReference>
<dbReference type="SMR" id="Q7Z4J2"/>
<dbReference type="BioGRID" id="131861">
    <property type="interactions" value="8"/>
</dbReference>
<dbReference type="FunCoup" id="Q7Z4J2">
    <property type="interactions" value="1"/>
</dbReference>
<dbReference type="IntAct" id="Q7Z4J2">
    <property type="interactions" value="6"/>
</dbReference>
<dbReference type="STRING" id="9606.ENSP00000360829"/>
<dbReference type="DrugBank" id="DB02379">
    <property type="generic name" value="Beta-D-Glucose"/>
</dbReference>
<dbReference type="DrugBank" id="DB04465">
    <property type="generic name" value="Lactose"/>
</dbReference>
<dbReference type="DrugBank" id="DB01861">
    <property type="generic name" value="Uridine diphosphate glucose"/>
</dbReference>
<dbReference type="DrugBank" id="DB03685">
    <property type="generic name" value="Uridine monophosphate"/>
</dbReference>
<dbReference type="DrugBank" id="DB03435">
    <property type="generic name" value="Uridine-5'-Diphosphate"/>
</dbReference>
<dbReference type="CAZy" id="GT6">
    <property type="family name" value="Glycosyltransferase Family 6"/>
</dbReference>
<dbReference type="GlyCosmos" id="Q7Z4J2">
    <property type="glycosylation" value="1 site, No reported glycans"/>
</dbReference>
<dbReference type="GlyGen" id="Q7Z4J2">
    <property type="glycosylation" value="2 sites"/>
</dbReference>
<dbReference type="iPTMnet" id="Q7Z4J2"/>
<dbReference type="PhosphoSitePlus" id="Q7Z4J2"/>
<dbReference type="BioMuta" id="GLT6D1"/>
<dbReference type="DMDM" id="74713517"/>
<dbReference type="jPOST" id="Q7Z4J2"/>
<dbReference type="PaxDb" id="9606-ENSP00000360829"/>
<dbReference type="PeptideAtlas" id="Q7Z4J2"/>
<dbReference type="Antibodypedia" id="8276">
    <property type="antibodies" value="47 antibodies from 15 providers"/>
</dbReference>
<dbReference type="DNASU" id="360203"/>
<dbReference type="Ensembl" id="ENST00000371763.6">
    <property type="protein sequence ID" value="ENSP00000360829.1"/>
    <property type="gene ID" value="ENSG00000204007.8"/>
</dbReference>
<dbReference type="GeneID" id="360203"/>
<dbReference type="KEGG" id="hsa:360203"/>
<dbReference type="MANE-Select" id="ENST00000371763.6">
    <property type="protein sequence ID" value="ENSP00000360829.1"/>
    <property type="RefSeq nucleotide sequence ID" value="NM_182974.3"/>
    <property type="RefSeq protein sequence ID" value="NP_892019.2"/>
</dbReference>
<dbReference type="UCSC" id="uc010nbd.1">
    <property type="organism name" value="human"/>
</dbReference>
<dbReference type="AGR" id="HGNC:23671"/>
<dbReference type="CTD" id="360203"/>
<dbReference type="DisGeNET" id="360203"/>
<dbReference type="GeneCards" id="GLT6D1"/>
<dbReference type="HGNC" id="HGNC:23671">
    <property type="gene designation" value="GLT6D1"/>
</dbReference>
<dbReference type="HPA" id="ENSG00000204007">
    <property type="expression patterns" value="Tissue enriched (testis)"/>
</dbReference>
<dbReference type="MIM" id="613699">
    <property type="type" value="gene"/>
</dbReference>
<dbReference type="neXtProt" id="NX_Q7Z4J2"/>
<dbReference type="OpenTargets" id="ENSG00000204007"/>
<dbReference type="PharmGKB" id="PA134906610"/>
<dbReference type="VEuPathDB" id="HostDB:ENSG00000204007"/>
<dbReference type="eggNOG" id="ENOG502RU0J">
    <property type="taxonomic scope" value="Eukaryota"/>
</dbReference>
<dbReference type="GeneTree" id="ENSGT00950000182858"/>
<dbReference type="HOGENOM" id="CLU_062445_1_0_1"/>
<dbReference type="InParanoid" id="Q7Z4J2"/>
<dbReference type="OMA" id="WLAPILW"/>
<dbReference type="OrthoDB" id="10013941at2759"/>
<dbReference type="PAN-GO" id="Q7Z4J2">
    <property type="GO annotations" value="4 GO annotations based on evolutionary models"/>
</dbReference>
<dbReference type="PhylomeDB" id="Q7Z4J2"/>
<dbReference type="TreeFam" id="TF330991"/>
<dbReference type="PathwayCommons" id="Q7Z4J2"/>
<dbReference type="SignaLink" id="Q7Z4J2"/>
<dbReference type="BioGRID-ORCS" id="360203">
    <property type="hits" value="8 hits in 1141 CRISPR screens"/>
</dbReference>
<dbReference type="GenomeRNAi" id="360203"/>
<dbReference type="Pharos" id="Q7Z4J2">
    <property type="development level" value="Tbio"/>
</dbReference>
<dbReference type="PRO" id="PR:Q7Z4J2"/>
<dbReference type="Proteomes" id="UP000005640">
    <property type="component" value="Chromosome 9"/>
</dbReference>
<dbReference type="RNAct" id="Q7Z4J2">
    <property type="molecule type" value="protein"/>
</dbReference>
<dbReference type="Bgee" id="ENSG00000204007">
    <property type="expression patterns" value="Expressed in left testis and 6 other cell types or tissues"/>
</dbReference>
<dbReference type="ExpressionAtlas" id="Q7Z4J2">
    <property type="expression patterns" value="baseline and differential"/>
</dbReference>
<dbReference type="GO" id="GO:0005794">
    <property type="term" value="C:Golgi apparatus"/>
    <property type="evidence" value="ECO:0000318"/>
    <property type="project" value="GO_Central"/>
</dbReference>
<dbReference type="GO" id="GO:0016020">
    <property type="term" value="C:membrane"/>
    <property type="evidence" value="ECO:0007669"/>
    <property type="project" value="UniProtKB-SubCell"/>
</dbReference>
<dbReference type="GO" id="GO:0031982">
    <property type="term" value="C:vesicle"/>
    <property type="evidence" value="ECO:0000318"/>
    <property type="project" value="GO_Central"/>
</dbReference>
<dbReference type="GO" id="GO:0016757">
    <property type="term" value="F:glycosyltransferase activity"/>
    <property type="evidence" value="ECO:0000318"/>
    <property type="project" value="GO_Central"/>
</dbReference>
<dbReference type="GO" id="GO:0016758">
    <property type="term" value="F:hexosyltransferase activity"/>
    <property type="evidence" value="ECO:0007669"/>
    <property type="project" value="InterPro"/>
</dbReference>
<dbReference type="GO" id="GO:0005975">
    <property type="term" value="P:carbohydrate metabolic process"/>
    <property type="evidence" value="ECO:0007669"/>
    <property type="project" value="InterPro"/>
</dbReference>
<dbReference type="GO" id="GO:0030259">
    <property type="term" value="P:lipid glycosylation"/>
    <property type="evidence" value="ECO:0000318"/>
    <property type="project" value="GO_Central"/>
</dbReference>
<dbReference type="FunFam" id="3.90.550.10:FF:000022">
    <property type="entry name" value="Histo-blood group ABO system transferase"/>
    <property type="match status" value="1"/>
</dbReference>
<dbReference type="Gene3D" id="3.90.550.10">
    <property type="entry name" value="Spore Coat Polysaccharide Biosynthesis Protein SpsA, Chain A"/>
    <property type="match status" value="1"/>
</dbReference>
<dbReference type="InterPro" id="IPR005076">
    <property type="entry name" value="Glyco_trans_6"/>
</dbReference>
<dbReference type="InterPro" id="IPR029044">
    <property type="entry name" value="Nucleotide-diphossugar_trans"/>
</dbReference>
<dbReference type="PANTHER" id="PTHR10462:SF27">
    <property type="entry name" value="GLYCOSYLTRANSFERASE 6 DOMAIN-CONTAINING PROTEIN 1-RELATED"/>
    <property type="match status" value="1"/>
</dbReference>
<dbReference type="PANTHER" id="PTHR10462">
    <property type="entry name" value="GLYCOSYLTRANSFERASE-RELATED"/>
    <property type="match status" value="1"/>
</dbReference>
<dbReference type="Pfam" id="PF03414">
    <property type="entry name" value="Glyco_transf_6"/>
    <property type="match status" value="1"/>
</dbReference>
<dbReference type="SUPFAM" id="SSF53448">
    <property type="entry name" value="Nucleotide-diphospho-sugar transferases"/>
    <property type="match status" value="1"/>
</dbReference>
<evidence type="ECO:0000250" key="1">
    <source>
        <dbReference type="UniProtKB" id="P14769"/>
    </source>
</evidence>
<evidence type="ECO:0000255" key="2"/>
<evidence type="ECO:0000269" key="3">
    <source>
    </source>
</evidence>
<evidence type="ECO:0000269" key="4">
    <source>
    </source>
</evidence>
<evidence type="ECO:0000269" key="5">
    <source ref="1"/>
</evidence>
<evidence type="ECO:0000305" key="6"/>
<evidence type="ECO:0000305" key="7">
    <source>
    </source>
</evidence>
<feature type="chain" id="PRO_0000311971" description="Putative glycosyltransferase 6 domain-containing protein 1">
    <location>
        <begin position="1"/>
        <end position="276"/>
    </location>
</feature>
<feature type="topological domain" description="Cytoplasmic" evidence="2">
    <location>
        <begin position="1"/>
        <end position="6"/>
    </location>
</feature>
<feature type="transmembrane region" description="Helical; Signal-anchor for type II membrane protein" evidence="2">
    <location>
        <begin position="7"/>
        <end position="23"/>
    </location>
</feature>
<feature type="topological domain" description="Lumenal" evidence="2">
    <location>
        <begin position="24"/>
        <end position="276"/>
    </location>
</feature>
<feature type="active site" description="Nucleophile" evidence="1">
    <location>
        <position position="263"/>
    </location>
</feature>
<feature type="binding site" evidence="1">
    <location>
        <begin position="82"/>
        <end position="87"/>
    </location>
    <ligand>
        <name>substrate</name>
    </ligand>
</feature>
<feature type="binding site" evidence="1">
    <location>
        <begin position="173"/>
        <end position="175"/>
    </location>
    <ligand>
        <name>substrate</name>
    </ligand>
</feature>
<feature type="binding site" evidence="1">
    <location>
        <begin position="195"/>
        <end position="198"/>
    </location>
    <ligand>
        <name>substrate</name>
    </ligand>
</feature>
<feature type="glycosylation site" description="N-linked (GlcNAc...) asparagine" evidence="2">
    <location>
        <position position="74"/>
    </location>
</feature>
<feature type="sequence variant" id="VAR_037382" description="In dbSNP:rs35762223." evidence="3">
    <original>H</original>
    <variation>R</variation>
    <location>
        <position position="195"/>
    </location>
</feature>
<feature type="sequence variant" id="VAR_037383" description="In dbSNP:rs17040344." evidence="3">
    <original>P</original>
    <variation>S</variation>
    <location>
        <position position="219"/>
    </location>
</feature>
<feature type="sequence variant" id="VAR_080956" evidence="5">
    <original>T</original>
    <variation>TKLLSPAYSWDLAFSPPPQIQYVKVAHDSQRKL</variation>
    <location>
        <position position="276"/>
    </location>
</feature>
<gene>
    <name type="primary">GLT6D1</name>
    <name type="synonym">GLTDC1</name>
    <name type="synonym">GT6M7</name>
</gene>
<protein>
    <recommendedName>
        <fullName>Putative glycosyltransferase 6 domain-containing protein 1</fullName>
        <ecNumber>2.4.1.-</ecNumber>
    </recommendedName>
    <alternativeName>
        <fullName>Galactosyltransferase family 6 domain-containing 1</fullName>
    </alternativeName>
</protein>
<sequence length="276" mass="32608">MNSKRMLLLVLFAFSLMLVERYFRNHQVEELRLSDWFHPRKRPDVITKTDWLAPVLWEGTFDRRVLEKHYRRRNITVGLAVFATGRFAEEYLRPFLHSANKHFMTGYRVIFYIMVDAFFKLPDIEPSPLRTFKAFKVGTERWWLDGPLVHVKSLGEHIASHIQDEVDFLFSMAANQVFQNEFGVETLGPLVAQLHAWWYFRNTKNFPYERRPTSAACIPFGQGDFYYGNLMVGGTPHNILDFIKEYLNGVIHDIKNGLNSTYEKHLNKYFYLNKPT</sequence>
<proteinExistence type="uncertain"/>
<accession>Q7Z4J2</accession>
<organism>
    <name type="scientific">Homo sapiens</name>
    <name type="common">Human</name>
    <dbReference type="NCBI Taxonomy" id="9606"/>
    <lineage>
        <taxon>Eukaryota</taxon>
        <taxon>Metazoa</taxon>
        <taxon>Chordata</taxon>
        <taxon>Craniata</taxon>
        <taxon>Vertebrata</taxon>
        <taxon>Euteleostomi</taxon>
        <taxon>Mammalia</taxon>
        <taxon>Eutheria</taxon>
        <taxon>Euarchontoglires</taxon>
        <taxon>Primates</taxon>
        <taxon>Haplorrhini</taxon>
        <taxon>Catarrhini</taxon>
        <taxon>Hominidae</taxon>
        <taxon>Homo</taxon>
    </lineage>
</organism>
<comment type="cofactor">
    <cofactor evidence="1">
        <name>Mn(2+)</name>
        <dbReference type="ChEBI" id="CHEBI:29035"/>
    </cofactor>
    <text evidence="1">Binds 1 Mn(2+) ion per subunit.</text>
</comment>
<comment type="subcellular location">
    <subcellularLocation>
        <location evidence="6">Membrane</location>
        <topology evidence="6">Single-pass type II membrane protein</topology>
    </subcellularLocation>
</comment>
<comment type="tissue specificity">
    <text evidence="4">Expressed in both healthy and inflamed gingival tissue samples at similar levels, with higher expression in the gingival connective tissue compared to gingival epithelium. Strongest expression in testis, followed by leukocytes.</text>
</comment>
<comment type="polymorphism">
    <text evidence="7">The stop codon in position 277 is polymorphic and is replaced, though at very low frequency, by a Lys codon allowing the translation of a longer protein. It is not clear if the common, shorter variant shown here is functional or not.</text>
</comment>
<comment type="similarity">
    <text evidence="6">Belongs to the glycosyltransferase 6 family.</text>
</comment>
<comment type="caution">
    <text evidence="3">Could be the product of a pseudogene.</text>
</comment>
<name>GL6D1_HUMAN</name>